<feature type="chain" id="PRO_0000349161" description="IMP cyclohydrolase">
    <location>
        <begin position="1"/>
        <end position="203"/>
    </location>
</feature>
<protein>
    <recommendedName>
        <fullName evidence="1">IMP cyclohydrolase</fullName>
        <ecNumber evidence="1">3.5.4.10</ecNumber>
    </recommendedName>
    <alternativeName>
        <fullName evidence="1">IMP synthase</fullName>
    </alternativeName>
    <alternativeName>
        <fullName evidence="1">Inosinicase</fullName>
    </alternativeName>
</protein>
<keyword id="KW-0378">Hydrolase</keyword>
<keyword id="KW-0658">Purine biosynthesis</keyword>
<organism>
    <name type="scientific">Methanococcus aeolicus (strain ATCC BAA-1280 / DSM 17508 / OCM 812 / Nankai-3)</name>
    <dbReference type="NCBI Taxonomy" id="419665"/>
    <lineage>
        <taxon>Archaea</taxon>
        <taxon>Methanobacteriati</taxon>
        <taxon>Methanobacteriota</taxon>
        <taxon>Methanomada group</taxon>
        <taxon>Methanococci</taxon>
        <taxon>Methanococcales</taxon>
        <taxon>Methanococcaceae</taxon>
        <taxon>Methanococcus</taxon>
    </lineage>
</organism>
<proteinExistence type="inferred from homology"/>
<dbReference type="EC" id="3.5.4.10" evidence="1"/>
<dbReference type="EMBL" id="CP000743">
    <property type="protein sequence ID" value="ABR56356.1"/>
    <property type="molecule type" value="Genomic_DNA"/>
</dbReference>
<dbReference type="RefSeq" id="WP_011973488.1">
    <property type="nucleotide sequence ID" value="NC_009635.1"/>
</dbReference>
<dbReference type="SMR" id="A6UV34"/>
<dbReference type="STRING" id="419665.Maeo_0773"/>
<dbReference type="GeneID" id="5326256"/>
<dbReference type="KEGG" id="mae:Maeo_0773"/>
<dbReference type="eggNOG" id="arCOG04727">
    <property type="taxonomic scope" value="Archaea"/>
</dbReference>
<dbReference type="HOGENOM" id="CLU_1352116_0_0_2"/>
<dbReference type="OrthoDB" id="92928at2157"/>
<dbReference type="UniPathway" id="UPA00074">
    <property type="reaction ID" value="UER00135"/>
</dbReference>
<dbReference type="Proteomes" id="UP000001106">
    <property type="component" value="Chromosome"/>
</dbReference>
<dbReference type="GO" id="GO:0003937">
    <property type="term" value="F:IMP cyclohydrolase activity"/>
    <property type="evidence" value="ECO:0007669"/>
    <property type="project" value="UniProtKB-UniRule"/>
</dbReference>
<dbReference type="GO" id="GO:0006189">
    <property type="term" value="P:'de novo' IMP biosynthetic process"/>
    <property type="evidence" value="ECO:0007669"/>
    <property type="project" value="UniProtKB-UniRule"/>
</dbReference>
<dbReference type="Gene3D" id="3.60.20.20">
    <property type="entry name" value="Inosine monophosphate cyclohydrolase-like"/>
    <property type="match status" value="1"/>
</dbReference>
<dbReference type="HAMAP" id="MF_00705">
    <property type="entry name" value="IMP_cyclohydrol"/>
    <property type="match status" value="1"/>
</dbReference>
<dbReference type="InterPro" id="IPR010191">
    <property type="entry name" value="IMP_cyclohydrolase"/>
</dbReference>
<dbReference type="InterPro" id="IPR020600">
    <property type="entry name" value="IMP_cyclohydrolase-like"/>
</dbReference>
<dbReference type="InterPro" id="IPR036795">
    <property type="entry name" value="IMP_cyclohydrolase-like_sf"/>
</dbReference>
<dbReference type="NCBIfam" id="NF003167">
    <property type="entry name" value="PRK04151.1"/>
    <property type="match status" value="1"/>
</dbReference>
<dbReference type="NCBIfam" id="TIGR01922">
    <property type="entry name" value="purO_arch"/>
    <property type="match status" value="1"/>
</dbReference>
<dbReference type="Pfam" id="PF07826">
    <property type="entry name" value="IMP_cyclohyd"/>
    <property type="match status" value="1"/>
</dbReference>
<dbReference type="PIRSF" id="PIRSF004866">
    <property type="entry name" value="IMP_cclhdr_arch"/>
    <property type="match status" value="1"/>
</dbReference>
<dbReference type="SUPFAM" id="SSF75569">
    <property type="entry name" value="Archaeal IMP cyclohydrolase PurO"/>
    <property type="match status" value="1"/>
</dbReference>
<name>PURO_META3</name>
<gene>
    <name evidence="1" type="primary">purO</name>
    <name type="ordered locus">Maeo_0773</name>
</gene>
<reference key="1">
    <citation type="submission" date="2007-06" db="EMBL/GenBank/DDBJ databases">
        <title>Complete sequence of Methanococcus aeolicus Nankai-3.</title>
        <authorList>
            <consortium name="US DOE Joint Genome Institute"/>
            <person name="Copeland A."/>
            <person name="Lucas S."/>
            <person name="Lapidus A."/>
            <person name="Barry K."/>
            <person name="Glavina del Rio T."/>
            <person name="Dalin E."/>
            <person name="Tice H."/>
            <person name="Pitluck S."/>
            <person name="Chain P."/>
            <person name="Malfatti S."/>
            <person name="Shin M."/>
            <person name="Vergez L."/>
            <person name="Schmutz J."/>
            <person name="Larimer F."/>
            <person name="Land M."/>
            <person name="Hauser L."/>
            <person name="Kyrpides N."/>
            <person name="Lykidis A."/>
            <person name="Sieprawska-Lupa M."/>
            <person name="Whitman W.B."/>
            <person name="Richardson P."/>
        </authorList>
    </citation>
    <scope>NUCLEOTIDE SEQUENCE [LARGE SCALE GENOMIC DNA]</scope>
    <source>
        <strain>ATCC BAA-1280 / DSM 17508 / OCM 812 / Nankai-3</strain>
    </source>
</reference>
<accession>A6UV34</accession>
<sequence length="203" mass="22766">MYIGRFLVVGKTQQGKPFVSYRVSSRSFPNRKAVINNTNDTVAILPNDLNDMFANPYIAYNCIKIVGNTVIATNGTHTDIIADKIKLELPIRDALALSLIAMDYEKDDYNTPRIAVVLNENTAYMGYVADNDIRIKEVPLKDGLAYYLSTYECCRISTEHQNIVVDGENPEEICKFVMDYEKFEKPVCCATATIDGDIELGTL</sequence>
<comment type="function">
    <text evidence="1">Catalyzes the cyclization of 5-formylamidoimidazole-4-carboxamide ribonucleotide to IMP.</text>
</comment>
<comment type="catalytic activity">
    <reaction evidence="1">
        <text>IMP + H2O = 5-formamido-1-(5-phospho-D-ribosyl)imidazole-4-carboxamide</text>
        <dbReference type="Rhea" id="RHEA:18445"/>
        <dbReference type="ChEBI" id="CHEBI:15377"/>
        <dbReference type="ChEBI" id="CHEBI:58053"/>
        <dbReference type="ChEBI" id="CHEBI:58467"/>
        <dbReference type="EC" id="3.5.4.10"/>
    </reaction>
</comment>
<comment type="pathway">
    <text evidence="1">Purine metabolism; IMP biosynthesis via de novo pathway; IMP from 5-formamido-1-(5-phospho-D-ribosyl)imidazole-4-carboxamide: step 1/1.</text>
</comment>
<comment type="similarity">
    <text evidence="1">Belongs to the archaeal IMP cyclohydrolase family.</text>
</comment>
<evidence type="ECO:0000255" key="1">
    <source>
        <dbReference type="HAMAP-Rule" id="MF_00705"/>
    </source>
</evidence>